<organism>
    <name type="scientific">Drosophila sechellia</name>
    <name type="common">Fruit fly</name>
    <dbReference type="NCBI Taxonomy" id="7238"/>
    <lineage>
        <taxon>Eukaryota</taxon>
        <taxon>Metazoa</taxon>
        <taxon>Ecdysozoa</taxon>
        <taxon>Arthropoda</taxon>
        <taxon>Hexapoda</taxon>
        <taxon>Insecta</taxon>
        <taxon>Pterygota</taxon>
        <taxon>Neoptera</taxon>
        <taxon>Endopterygota</taxon>
        <taxon>Diptera</taxon>
        <taxon>Brachycera</taxon>
        <taxon>Muscomorpha</taxon>
        <taxon>Ephydroidea</taxon>
        <taxon>Drosophilidae</taxon>
        <taxon>Drosophila</taxon>
        <taxon>Sophophora</taxon>
    </lineage>
</organism>
<name>CTU1_DROSE</name>
<reference key="1">
    <citation type="journal article" date="2007" name="Nature">
        <title>Evolution of genes and genomes on the Drosophila phylogeny.</title>
        <authorList>
            <consortium name="Drosophila 12 genomes consortium"/>
        </authorList>
    </citation>
    <scope>NUCLEOTIDE SEQUENCE [LARGE SCALE GENOMIC DNA]</scope>
    <source>
        <strain>Rob3c / Tucson 14021-0248.25</strain>
    </source>
</reference>
<accession>B4HSL7</accession>
<comment type="function">
    <text evidence="1">Plays a central role in 2-thiolation of mcm(5)S(2)U at tRNA wobble positions of tRNA(Lys), tRNA(Glu) and tRNA(Gln). Directly binds tRNAs and probably acts by catalyzing adenylation of tRNAs, an intermediate required for 2-thiolation. It is unclear whether it acts as a sulfurtransferase that transfers sulfur from thiocarboxylated URM1 onto the uridine of tRNAs at wobble position.</text>
</comment>
<comment type="pathway">
    <text evidence="1">tRNA modification; 5-methoxycarbonylmethyl-2-thiouridine-tRNA biosynthesis.</text>
</comment>
<comment type="subcellular location">
    <subcellularLocation>
        <location evidence="1">Cytoplasm</location>
    </subcellularLocation>
</comment>
<comment type="similarity">
    <text evidence="1">Belongs to the TtcA family. CTU1/NCS6/ATPBD3 subfamily.</text>
</comment>
<feature type="chain" id="PRO_0000368243" description="Cytoplasmic tRNA 2-thiolation protein 1">
    <location>
        <begin position="1"/>
        <end position="343"/>
    </location>
</feature>
<gene>
    <name type="ORF">GM20632</name>
</gene>
<proteinExistence type="inferred from homology"/>
<sequence length="343" mass="38481">MPIICKSKCGNRAALKRPKTGDALCKECFFAAFEAEIHHTISSSNLFRRGEKVAVAASGGKDSTVLAHVLKLLNERHNYGLELVLLSIDEGITGYRDDSLETVKQNRDDYQMPLKILSYEELYGWTMDRIVAQIGRSNNCTFCGVFRRQALDRGAKLLGVDSIATGHNADDIAETVLMNVLRGDTARLRRCTSIRTGGGEDSIPRVKPLKYSYEKEIVMYAHYKKLVYFSTECVFAPNAYRGHARAFLKDLEKVRPSVIMDIIYSGEQLRFKDTVKKPERGTCTRCGFVSSQQPCKACVLLEGLNRGLPKLGIGKKTKGERMIAKQNQELALRERANLVKNDF</sequence>
<dbReference type="EC" id="2.7.7.-" evidence="1"/>
<dbReference type="EMBL" id="CH480816">
    <property type="protein sequence ID" value="EDW47044.1"/>
    <property type="molecule type" value="Genomic_DNA"/>
</dbReference>
<dbReference type="SMR" id="B4HSL7"/>
<dbReference type="STRING" id="7238.B4HSL7"/>
<dbReference type="EnsemblMetazoa" id="FBtr0203617">
    <property type="protein sequence ID" value="FBpp0202109"/>
    <property type="gene ID" value="FBgn0175514"/>
</dbReference>
<dbReference type="EnsemblMetazoa" id="XM_002032995.2">
    <property type="protein sequence ID" value="XP_002033031.1"/>
    <property type="gene ID" value="LOC6608294"/>
</dbReference>
<dbReference type="GeneID" id="6608294"/>
<dbReference type="KEGG" id="dse:6608294"/>
<dbReference type="CTD" id="90353"/>
<dbReference type="HOGENOM" id="CLU_026481_1_2_1"/>
<dbReference type="OMA" id="KPVRGIC"/>
<dbReference type="OrthoDB" id="4288at7215"/>
<dbReference type="PhylomeDB" id="B4HSL7"/>
<dbReference type="UniPathway" id="UPA00988"/>
<dbReference type="Proteomes" id="UP000001292">
    <property type="component" value="Unassembled WGS sequence"/>
</dbReference>
<dbReference type="GO" id="GO:0005829">
    <property type="term" value="C:cytosol"/>
    <property type="evidence" value="ECO:0000250"/>
    <property type="project" value="UniProtKB"/>
</dbReference>
<dbReference type="GO" id="GO:0002144">
    <property type="term" value="C:cytosolic tRNA wobble base thiouridylase complex"/>
    <property type="evidence" value="ECO:0007669"/>
    <property type="project" value="TreeGrafter"/>
</dbReference>
<dbReference type="GO" id="GO:0005739">
    <property type="term" value="C:mitochondrion"/>
    <property type="evidence" value="ECO:0007669"/>
    <property type="project" value="TreeGrafter"/>
</dbReference>
<dbReference type="GO" id="GO:0016779">
    <property type="term" value="F:nucleotidyltransferase activity"/>
    <property type="evidence" value="ECO:0007669"/>
    <property type="project" value="UniProtKB-UniRule"/>
</dbReference>
<dbReference type="GO" id="GO:0000049">
    <property type="term" value="F:tRNA binding"/>
    <property type="evidence" value="ECO:0000250"/>
    <property type="project" value="UniProtKB"/>
</dbReference>
<dbReference type="GO" id="GO:0032447">
    <property type="term" value="P:protein urmylation"/>
    <property type="evidence" value="ECO:0007669"/>
    <property type="project" value="UniProtKB-UniRule"/>
</dbReference>
<dbReference type="GO" id="GO:0034227">
    <property type="term" value="P:tRNA thio-modification"/>
    <property type="evidence" value="ECO:0000250"/>
    <property type="project" value="UniProtKB"/>
</dbReference>
<dbReference type="GO" id="GO:0002143">
    <property type="term" value="P:tRNA wobble position uridine thiolation"/>
    <property type="evidence" value="ECO:0007669"/>
    <property type="project" value="TreeGrafter"/>
</dbReference>
<dbReference type="GO" id="GO:0002098">
    <property type="term" value="P:tRNA wobble uridine modification"/>
    <property type="evidence" value="ECO:0000250"/>
    <property type="project" value="UniProtKB"/>
</dbReference>
<dbReference type="CDD" id="cd01713">
    <property type="entry name" value="CTU1-like"/>
    <property type="match status" value="1"/>
</dbReference>
<dbReference type="FunFam" id="3.40.50.620:FF:000054">
    <property type="entry name" value="Cytoplasmic tRNA 2-thiolation protein 1"/>
    <property type="match status" value="1"/>
</dbReference>
<dbReference type="Gene3D" id="3.40.50.620">
    <property type="entry name" value="HUPs"/>
    <property type="match status" value="1"/>
</dbReference>
<dbReference type="HAMAP" id="MF_03053">
    <property type="entry name" value="CTU1"/>
    <property type="match status" value="1"/>
</dbReference>
<dbReference type="InterPro" id="IPR056369">
    <property type="entry name" value="CTU1-like_ATP-bd"/>
</dbReference>
<dbReference type="InterPro" id="IPR032442">
    <property type="entry name" value="CTU1_C"/>
</dbReference>
<dbReference type="InterPro" id="IPR000541">
    <property type="entry name" value="Ncs6/Tuc1/Ctu1"/>
</dbReference>
<dbReference type="InterPro" id="IPR014729">
    <property type="entry name" value="Rossmann-like_a/b/a_fold"/>
</dbReference>
<dbReference type="InterPro" id="IPR011063">
    <property type="entry name" value="TilS/TtcA_N"/>
</dbReference>
<dbReference type="InterPro" id="IPR035107">
    <property type="entry name" value="tRNA_thiolation_TtcA_Ctu1"/>
</dbReference>
<dbReference type="InterPro" id="IPR054306">
    <property type="entry name" value="TtuA-like_LIM_N"/>
</dbReference>
<dbReference type="InterPro" id="IPR020554">
    <property type="entry name" value="UPF0021_CS"/>
</dbReference>
<dbReference type="NCBIfam" id="TIGR00269">
    <property type="entry name" value="TIGR00269 family protein"/>
    <property type="match status" value="1"/>
</dbReference>
<dbReference type="PANTHER" id="PTHR11807">
    <property type="entry name" value="ATPASES OF THE PP SUPERFAMILY-RELATED"/>
    <property type="match status" value="1"/>
</dbReference>
<dbReference type="PANTHER" id="PTHR11807:SF12">
    <property type="entry name" value="CYTOPLASMIC TRNA 2-THIOLATION PROTEIN 1"/>
    <property type="match status" value="1"/>
</dbReference>
<dbReference type="Pfam" id="PF01171">
    <property type="entry name" value="ATP_bind_3"/>
    <property type="match status" value="1"/>
</dbReference>
<dbReference type="Pfam" id="PF22082">
    <property type="entry name" value="TtuA_LIM_N"/>
    <property type="match status" value="1"/>
</dbReference>
<dbReference type="Pfam" id="PF16503">
    <property type="entry name" value="zn-ribbon_14"/>
    <property type="match status" value="1"/>
</dbReference>
<dbReference type="PIRSF" id="PIRSF004976">
    <property type="entry name" value="ATPase_YdaO"/>
    <property type="match status" value="1"/>
</dbReference>
<dbReference type="SUPFAM" id="SSF52402">
    <property type="entry name" value="Adenine nucleotide alpha hydrolases-like"/>
    <property type="match status" value="1"/>
</dbReference>
<dbReference type="PROSITE" id="PS01263">
    <property type="entry name" value="UPF0021"/>
    <property type="match status" value="1"/>
</dbReference>
<keyword id="KW-0963">Cytoplasm</keyword>
<keyword id="KW-1185">Reference proteome</keyword>
<keyword id="KW-0694">RNA-binding</keyword>
<keyword id="KW-0808">Transferase</keyword>
<keyword id="KW-0819">tRNA processing</keyword>
<keyword id="KW-0820">tRNA-binding</keyword>
<evidence type="ECO:0000255" key="1">
    <source>
        <dbReference type="HAMAP-Rule" id="MF_03053"/>
    </source>
</evidence>
<protein>
    <recommendedName>
        <fullName evidence="1">Cytoplasmic tRNA 2-thiolation protein 1</fullName>
        <ecNumber evidence="1">2.7.7.-</ecNumber>
    </recommendedName>
    <alternativeName>
        <fullName evidence="1">Cytoplasmic tRNA adenylyltransferase 1</fullName>
    </alternativeName>
</protein>